<name>GSH1_BAUCH</name>
<sequence>MIPDVSSDTLFWLKANPQALQGIYRGVERETLRINTQGHLAQTPHPKKLGAALTHKWITTDFAETLLEFITPVAQDIDHMLTLLRDIHRHVARHLCNEWMWPMSMPCFIDSQQQIKLAQYGPSNMGRMKTLYRKGLKNRYSAMMQIISGVHYNFSLPLTFWQVYAGVSDMNSNKDIISAGYLGLIRNYYRFGWIIPYIFGASPGVCQSFMKNRDTDLPFIKASSGFLYLPYATSLRMSDLGYANKSQSQLDITFNSLKEYVFRLKHAIRTPYADYQRIGLKKNGSYLQLNTNILQSENELYAPIRPKRITKNEESPLDALLRRGIEYIEVRALDINPFSPVGIDEEQVRFLDLFLIWCTLAPAPKMSTRELLYTRLNWTKVILEGRKPGLTLIVDGGSSKKPLATIGKELFSAMQALAETLDSHNGNIQYQQVCHKLRACIDQPELTLSARILKEMKKYGIRGLGLTLANQYFQILLEEPLEMFNELTFDKEQIRSWHRQLELEALDILSFDDFLAHINSHQQ</sequence>
<keyword id="KW-0067">ATP-binding</keyword>
<keyword id="KW-0317">Glutathione biosynthesis</keyword>
<keyword id="KW-0436">Ligase</keyword>
<keyword id="KW-0547">Nucleotide-binding</keyword>
<keyword id="KW-1185">Reference proteome</keyword>
<reference key="1">
    <citation type="journal article" date="2006" name="PLoS Biol.">
        <title>Metabolic complementarity and genomics of the dual bacterial symbiosis of sharpshooters.</title>
        <authorList>
            <person name="Wu D."/>
            <person name="Daugherty S.C."/>
            <person name="Van Aken S.E."/>
            <person name="Pai G.H."/>
            <person name="Watkins K.L."/>
            <person name="Khouri H."/>
            <person name="Tallon L.J."/>
            <person name="Zaborsky J.M."/>
            <person name="Dunbar H.E."/>
            <person name="Tran P.L."/>
            <person name="Moran N.A."/>
            <person name="Eisen J.A."/>
        </authorList>
    </citation>
    <scope>NUCLEOTIDE SEQUENCE [LARGE SCALE GENOMIC DNA]</scope>
</reference>
<accession>Q1LTQ6</accession>
<feature type="chain" id="PRO_1000025168" description="Glutamate--cysteine ligase">
    <location>
        <begin position="1"/>
        <end position="523"/>
    </location>
</feature>
<proteinExistence type="inferred from homology"/>
<gene>
    <name evidence="1" type="primary">gshA</name>
    <name type="ordered locus">BCI_0201</name>
</gene>
<organism>
    <name type="scientific">Baumannia cicadellinicola subsp. Homalodisca coagulata</name>
    <dbReference type="NCBI Taxonomy" id="374463"/>
    <lineage>
        <taxon>Bacteria</taxon>
        <taxon>Pseudomonadati</taxon>
        <taxon>Pseudomonadota</taxon>
        <taxon>Gammaproteobacteria</taxon>
        <taxon>Candidatus Palibaumannia</taxon>
    </lineage>
</organism>
<comment type="catalytic activity">
    <reaction evidence="1">
        <text>L-cysteine + L-glutamate + ATP = gamma-L-glutamyl-L-cysteine + ADP + phosphate + H(+)</text>
        <dbReference type="Rhea" id="RHEA:13285"/>
        <dbReference type="ChEBI" id="CHEBI:15378"/>
        <dbReference type="ChEBI" id="CHEBI:29985"/>
        <dbReference type="ChEBI" id="CHEBI:30616"/>
        <dbReference type="ChEBI" id="CHEBI:35235"/>
        <dbReference type="ChEBI" id="CHEBI:43474"/>
        <dbReference type="ChEBI" id="CHEBI:58173"/>
        <dbReference type="ChEBI" id="CHEBI:456216"/>
        <dbReference type="EC" id="6.3.2.2"/>
    </reaction>
</comment>
<comment type="pathway">
    <text evidence="1">Sulfur metabolism; glutathione biosynthesis; glutathione from L-cysteine and L-glutamate: step 1/2.</text>
</comment>
<comment type="similarity">
    <text evidence="1">Belongs to the glutamate--cysteine ligase type 1 family. Type 1 subfamily.</text>
</comment>
<protein>
    <recommendedName>
        <fullName evidence="1">Glutamate--cysteine ligase</fullName>
        <ecNumber evidence="1">6.3.2.2</ecNumber>
    </recommendedName>
    <alternativeName>
        <fullName evidence="1">Gamma-ECS</fullName>
        <shortName evidence="1">GCS</shortName>
    </alternativeName>
    <alternativeName>
        <fullName evidence="1">Gamma-glutamylcysteine synthetase</fullName>
    </alternativeName>
</protein>
<evidence type="ECO:0000255" key="1">
    <source>
        <dbReference type="HAMAP-Rule" id="MF_00578"/>
    </source>
</evidence>
<dbReference type="EC" id="6.3.2.2" evidence="1"/>
<dbReference type="EMBL" id="CP000238">
    <property type="protein sequence ID" value="ABF13792.1"/>
    <property type="molecule type" value="Genomic_DNA"/>
</dbReference>
<dbReference type="RefSeq" id="WP_011520391.1">
    <property type="nucleotide sequence ID" value="NC_007984.1"/>
</dbReference>
<dbReference type="SMR" id="Q1LTQ6"/>
<dbReference type="STRING" id="374463.BCI_0201"/>
<dbReference type="KEGG" id="bci:BCI_0201"/>
<dbReference type="HOGENOM" id="CLU_020728_3_0_6"/>
<dbReference type="OrthoDB" id="9803907at2"/>
<dbReference type="UniPathway" id="UPA00142">
    <property type="reaction ID" value="UER00209"/>
</dbReference>
<dbReference type="Proteomes" id="UP000002427">
    <property type="component" value="Chromosome"/>
</dbReference>
<dbReference type="GO" id="GO:0005829">
    <property type="term" value="C:cytosol"/>
    <property type="evidence" value="ECO:0007669"/>
    <property type="project" value="TreeGrafter"/>
</dbReference>
<dbReference type="GO" id="GO:0005524">
    <property type="term" value="F:ATP binding"/>
    <property type="evidence" value="ECO:0007669"/>
    <property type="project" value="UniProtKB-KW"/>
</dbReference>
<dbReference type="GO" id="GO:0004357">
    <property type="term" value="F:glutamate-cysteine ligase activity"/>
    <property type="evidence" value="ECO:0007669"/>
    <property type="project" value="UniProtKB-UniRule"/>
</dbReference>
<dbReference type="GO" id="GO:0046872">
    <property type="term" value="F:metal ion binding"/>
    <property type="evidence" value="ECO:0007669"/>
    <property type="project" value="TreeGrafter"/>
</dbReference>
<dbReference type="GO" id="GO:0006750">
    <property type="term" value="P:glutathione biosynthetic process"/>
    <property type="evidence" value="ECO:0007669"/>
    <property type="project" value="UniProtKB-UniRule"/>
</dbReference>
<dbReference type="FunFam" id="3.30.590.20:FF:000001">
    <property type="entry name" value="Glutamate--cysteine ligase"/>
    <property type="match status" value="1"/>
</dbReference>
<dbReference type="Gene3D" id="3.30.590.20">
    <property type="match status" value="1"/>
</dbReference>
<dbReference type="HAMAP" id="MF_00578">
    <property type="entry name" value="Glu_cys_ligase"/>
    <property type="match status" value="1"/>
</dbReference>
<dbReference type="InterPro" id="IPR014746">
    <property type="entry name" value="Gln_synth/guanido_kin_cat_dom"/>
</dbReference>
<dbReference type="InterPro" id="IPR007370">
    <property type="entry name" value="Glu_cys_ligase"/>
</dbReference>
<dbReference type="InterPro" id="IPR006334">
    <property type="entry name" value="Glut_cys_ligase"/>
</dbReference>
<dbReference type="NCBIfam" id="TIGR01434">
    <property type="entry name" value="glu_cys_ligase"/>
    <property type="match status" value="1"/>
</dbReference>
<dbReference type="PANTHER" id="PTHR38761">
    <property type="entry name" value="GLUTAMATE--CYSTEINE LIGASE"/>
    <property type="match status" value="1"/>
</dbReference>
<dbReference type="PANTHER" id="PTHR38761:SF1">
    <property type="entry name" value="GLUTAMATE--CYSTEINE LIGASE"/>
    <property type="match status" value="1"/>
</dbReference>
<dbReference type="Pfam" id="PF04262">
    <property type="entry name" value="Glu_cys_ligase"/>
    <property type="match status" value="1"/>
</dbReference>
<dbReference type="SUPFAM" id="SSF55931">
    <property type="entry name" value="Glutamine synthetase/guanido kinase"/>
    <property type="match status" value="1"/>
</dbReference>